<comment type="subcellular location">
    <subcellularLocation>
        <location evidence="3">Mitochondrion membrane</location>
        <topology evidence="3">Single-pass membrane protein</topology>
    </subcellularLocation>
</comment>
<comment type="induction">
    <text evidence="2">Abundant in stationary phase (G0) cells. mRNA levels rapidly decrease upon exit from G0.</text>
</comment>
<comment type="sequence caution" evidence="3">
    <conflict type="frameshift">
        <sequence resource="EMBL-CDS" id="CAA61186"/>
    </conflict>
</comment>
<comment type="sequence caution" evidence="3">
    <conflict type="frameshift">
        <sequence resource="EMBL-CDS" id="CAA97264"/>
    </conflict>
</comment>
<organism>
    <name type="scientific">Saccharomyces cerevisiae (strain ATCC 204508 / S288c)</name>
    <name type="common">Baker's yeast</name>
    <dbReference type="NCBI Taxonomy" id="559292"/>
    <lineage>
        <taxon>Eukaryota</taxon>
        <taxon>Fungi</taxon>
        <taxon>Dikarya</taxon>
        <taxon>Ascomycota</taxon>
        <taxon>Saccharomycotina</taxon>
        <taxon>Saccharomycetes</taxon>
        <taxon>Saccharomycetales</taxon>
        <taxon>Saccharomycetaceae</taxon>
        <taxon>Saccharomyces</taxon>
    </lineage>
</organism>
<gene>
    <name type="primary">SPG1</name>
    <name type="ordered locus">YGR236C</name>
    <name type="ORF">G8578</name>
</gene>
<dbReference type="EMBL" id="X87941">
    <property type="protein sequence ID" value="CAA61186.1"/>
    <property type="status" value="ALT_FRAME"/>
    <property type="molecule type" value="Genomic_DNA"/>
</dbReference>
<dbReference type="EMBL" id="Z73021">
    <property type="protein sequence ID" value="CAA97264.1"/>
    <property type="status" value="ALT_FRAME"/>
    <property type="molecule type" value="Genomic_DNA"/>
</dbReference>
<dbReference type="EMBL" id="BK006941">
    <property type="protein sequence ID" value="DAA08327.1"/>
    <property type="molecule type" value="Genomic_DNA"/>
</dbReference>
<dbReference type="PIR" id="S57701">
    <property type="entry name" value="S57701"/>
</dbReference>
<dbReference type="RefSeq" id="NP_011752.4">
    <property type="nucleotide sequence ID" value="NM_001181365.3"/>
</dbReference>
<dbReference type="SMR" id="P50088"/>
<dbReference type="BioGRID" id="33488">
    <property type="interactions" value="18"/>
</dbReference>
<dbReference type="DIP" id="DIP-4078N"/>
<dbReference type="FunCoup" id="P50088">
    <property type="interactions" value="36"/>
</dbReference>
<dbReference type="STRING" id="4932.YGR236C"/>
<dbReference type="PaxDb" id="4932-YGR236C"/>
<dbReference type="PeptideAtlas" id="P50088"/>
<dbReference type="EnsemblFungi" id="YGR236C_mRNA">
    <property type="protein sequence ID" value="YGR236C"/>
    <property type="gene ID" value="YGR236C"/>
</dbReference>
<dbReference type="GeneID" id="853151"/>
<dbReference type="KEGG" id="sce:YGR236C"/>
<dbReference type="AGR" id="SGD:S000003468"/>
<dbReference type="SGD" id="S000003468">
    <property type="gene designation" value="SPG1"/>
</dbReference>
<dbReference type="VEuPathDB" id="FungiDB:YGR236C"/>
<dbReference type="eggNOG" id="ENOG502SCND">
    <property type="taxonomic scope" value="Eukaryota"/>
</dbReference>
<dbReference type="HOGENOM" id="CLU_183906_0_0_1"/>
<dbReference type="InParanoid" id="P50088"/>
<dbReference type="OMA" id="ENIAHKP"/>
<dbReference type="OrthoDB" id="4061674at2759"/>
<dbReference type="BioCyc" id="YEAST:G3O-30914-MONOMER"/>
<dbReference type="BioGRID-ORCS" id="853151">
    <property type="hits" value="0 hits in 10 CRISPR screens"/>
</dbReference>
<dbReference type="PRO" id="PR:P50088"/>
<dbReference type="Proteomes" id="UP000002311">
    <property type="component" value="Chromosome VII"/>
</dbReference>
<dbReference type="RNAct" id="P50088">
    <property type="molecule type" value="protein"/>
</dbReference>
<dbReference type="GO" id="GO:0005783">
    <property type="term" value="C:endoplasmic reticulum"/>
    <property type="evidence" value="ECO:0007005"/>
    <property type="project" value="SGD"/>
</dbReference>
<dbReference type="GO" id="GO:0031966">
    <property type="term" value="C:mitochondrial membrane"/>
    <property type="evidence" value="ECO:0007669"/>
    <property type="project" value="UniProtKB-SubCell"/>
</dbReference>
<dbReference type="GO" id="GO:0005739">
    <property type="term" value="C:mitochondrion"/>
    <property type="evidence" value="ECO:0007005"/>
    <property type="project" value="SGD"/>
</dbReference>
<sequence>MKLDSGIYSEAQRVVRTPKFRYIMLGLVGAAVVPTAYMRRGYTVPAHSLDNINGVDTTKASVMGTEQRAAMTKGKSLQEMMDDDEVTYLMFSSIM</sequence>
<protein>
    <recommendedName>
        <fullName>Stationary phase gene 1 protein</fullName>
    </recommendedName>
</protein>
<proteinExistence type="evidence at protein level"/>
<name>SPG1_YEAST</name>
<evidence type="ECO:0000255" key="1"/>
<evidence type="ECO:0000269" key="2">
    <source>
    </source>
</evidence>
<evidence type="ECO:0000305" key="3"/>
<keyword id="KW-0472">Membrane</keyword>
<keyword id="KW-0496">Mitochondrion</keyword>
<keyword id="KW-1185">Reference proteome</keyword>
<keyword id="KW-0812">Transmembrane</keyword>
<keyword id="KW-1133">Transmembrane helix</keyword>
<reference key="1">
    <citation type="journal article" date="1996" name="Yeast">
        <title>Sequence analysis of the 43 kb CRM1-YLM9-PET54-DIE2-SMI1-PHO81-YHB4-PFK1 region from the right arm of Saccharomyces cerevisiae chromosome VII.</title>
        <authorList>
            <person name="van der Aart Q.J.M."/>
            <person name="Kleine K."/>
            <person name="Steensma H.Y."/>
        </authorList>
    </citation>
    <scope>NUCLEOTIDE SEQUENCE [GENOMIC DNA]</scope>
    <source>
        <strain>ATCC 204508 / S288c</strain>
    </source>
</reference>
<reference key="2">
    <citation type="journal article" date="1997" name="Nature">
        <title>The nucleotide sequence of Saccharomyces cerevisiae chromosome VII.</title>
        <authorList>
            <person name="Tettelin H."/>
            <person name="Agostoni-Carbone M.L."/>
            <person name="Albermann K."/>
            <person name="Albers M."/>
            <person name="Arroyo J."/>
            <person name="Backes U."/>
            <person name="Barreiros T."/>
            <person name="Bertani I."/>
            <person name="Bjourson A.J."/>
            <person name="Brueckner M."/>
            <person name="Bruschi C.V."/>
            <person name="Carignani G."/>
            <person name="Castagnoli L."/>
            <person name="Cerdan E."/>
            <person name="Clemente M.L."/>
            <person name="Coblenz A."/>
            <person name="Coglievina M."/>
            <person name="Coissac E."/>
            <person name="Defoor E."/>
            <person name="Del Bino S."/>
            <person name="Delius H."/>
            <person name="Delneri D."/>
            <person name="de Wergifosse P."/>
            <person name="Dujon B."/>
            <person name="Durand P."/>
            <person name="Entian K.-D."/>
            <person name="Eraso P."/>
            <person name="Escribano V."/>
            <person name="Fabiani L."/>
            <person name="Fartmann B."/>
            <person name="Feroli F."/>
            <person name="Feuermann M."/>
            <person name="Frontali L."/>
            <person name="Garcia-Gonzalez M."/>
            <person name="Garcia-Saez M.I."/>
            <person name="Goffeau A."/>
            <person name="Guerreiro P."/>
            <person name="Hani J."/>
            <person name="Hansen M."/>
            <person name="Hebling U."/>
            <person name="Hernandez K."/>
            <person name="Heumann K."/>
            <person name="Hilger F."/>
            <person name="Hofmann B."/>
            <person name="Indge K.J."/>
            <person name="James C.M."/>
            <person name="Klima R."/>
            <person name="Koetter P."/>
            <person name="Kramer B."/>
            <person name="Kramer W."/>
            <person name="Lauquin G."/>
            <person name="Leuther H."/>
            <person name="Louis E.J."/>
            <person name="Maillier E."/>
            <person name="Marconi A."/>
            <person name="Martegani E."/>
            <person name="Mazon M.J."/>
            <person name="Mazzoni C."/>
            <person name="McReynolds A.D.K."/>
            <person name="Melchioretto P."/>
            <person name="Mewes H.-W."/>
            <person name="Minenkova O."/>
            <person name="Mueller-Auer S."/>
            <person name="Nawrocki A."/>
            <person name="Netter P."/>
            <person name="Neu R."/>
            <person name="Nombela C."/>
            <person name="Oliver S.G."/>
            <person name="Panzeri L."/>
            <person name="Paoluzi S."/>
            <person name="Plevani P."/>
            <person name="Portetelle D."/>
            <person name="Portillo F."/>
            <person name="Potier S."/>
            <person name="Purnelle B."/>
            <person name="Rieger M."/>
            <person name="Riles L."/>
            <person name="Rinaldi T."/>
            <person name="Robben J."/>
            <person name="Rodrigues-Pousada C."/>
            <person name="Rodriguez-Belmonte E."/>
            <person name="Rodriguez-Torres A.M."/>
            <person name="Rose M."/>
            <person name="Ruzzi M."/>
            <person name="Saliola M."/>
            <person name="Sanchez-Perez M."/>
            <person name="Schaefer B."/>
            <person name="Schaefer M."/>
            <person name="Scharfe M."/>
            <person name="Schmidheini T."/>
            <person name="Schreer A."/>
            <person name="Skala J."/>
            <person name="Souciet J.-L."/>
            <person name="Steensma H.Y."/>
            <person name="Talla E."/>
            <person name="Thierry A."/>
            <person name="Vandenbol M."/>
            <person name="van der Aart Q.J.M."/>
            <person name="Van Dyck L."/>
            <person name="Vanoni M."/>
            <person name="Verhasselt P."/>
            <person name="Voet M."/>
            <person name="Volckaert G."/>
            <person name="Wambutt R."/>
            <person name="Watson M.D."/>
            <person name="Weber N."/>
            <person name="Wedler E."/>
            <person name="Wedler H."/>
            <person name="Wipfli P."/>
            <person name="Wolf K."/>
            <person name="Wright L.F."/>
            <person name="Zaccaria P."/>
            <person name="Zimmermann M."/>
            <person name="Zollner A."/>
            <person name="Kleine K."/>
        </authorList>
    </citation>
    <scope>NUCLEOTIDE SEQUENCE [LARGE SCALE GENOMIC DNA]</scope>
    <source>
        <strain>ATCC 204508 / S288c</strain>
    </source>
</reference>
<reference key="3">
    <citation type="journal article" date="2014" name="G3 (Bethesda)">
        <title>The reference genome sequence of Saccharomyces cerevisiae: Then and now.</title>
        <authorList>
            <person name="Engel S.R."/>
            <person name="Dietrich F.S."/>
            <person name="Fisk D.G."/>
            <person name="Binkley G."/>
            <person name="Balakrishnan R."/>
            <person name="Costanzo M.C."/>
            <person name="Dwight S.S."/>
            <person name="Hitz B.C."/>
            <person name="Karra K."/>
            <person name="Nash R.S."/>
            <person name="Weng S."/>
            <person name="Wong E.D."/>
            <person name="Lloyd P."/>
            <person name="Skrzypek M.S."/>
            <person name="Miyasato S.R."/>
            <person name="Simison M."/>
            <person name="Cherry J.M."/>
        </authorList>
    </citation>
    <scope>GENOME REANNOTATION</scope>
    <source>
        <strain>ATCC 204508 / S288c</strain>
    </source>
</reference>
<reference key="4">
    <citation type="journal article" date="2003" name="Nature">
        <title>Sequencing and comparison of yeast species to identify genes and regulatory elements.</title>
        <authorList>
            <person name="Kellis M."/>
            <person name="Patterson N."/>
            <person name="Endrizzi M."/>
            <person name="Birren B.W."/>
            <person name="Lander E.S."/>
        </authorList>
    </citation>
    <scope>IDENTIFICATION OF FRAMESHIFT</scope>
</reference>
<reference key="5">
    <citation type="journal article" date="2003" name="Proc. Natl. Acad. Sci. U.S.A.">
        <title>The proteome of Saccharomyces cerevisiae mitochondria.</title>
        <authorList>
            <person name="Sickmann A."/>
            <person name="Reinders J."/>
            <person name="Wagner Y."/>
            <person name="Joppich C."/>
            <person name="Zahedi R.P."/>
            <person name="Meyer H.E."/>
            <person name="Schoenfisch B."/>
            <person name="Perschil I."/>
            <person name="Chacinska A."/>
            <person name="Guiard B."/>
            <person name="Rehling P."/>
            <person name="Pfanner N."/>
            <person name="Meisinger C."/>
        </authorList>
    </citation>
    <scope>SUBCELLULAR LOCATION [LARGE SCALE ANALYSIS]</scope>
    <source>
        <strain>ATCC 76625 / YPH499</strain>
    </source>
</reference>
<reference key="6">
    <citation type="journal article" date="2004" name="Mol. Biol. Cell">
        <title>Genomic analysis of stationary-phase and exit in Saccharomyces cerevisiae: gene expression and identification of novel essential genes.</title>
        <authorList>
            <person name="Martinez M.J."/>
            <person name="Roy S."/>
            <person name="Archuletta A.B."/>
            <person name="Wentzell P.D."/>
            <person name="Anna-Arriola S.S."/>
            <person name="Rodriguez A.L."/>
            <person name="Aragon A.D."/>
            <person name="Quinones G.A."/>
            <person name="Allen C."/>
            <person name="Werner-Washburne M."/>
        </authorList>
    </citation>
    <scope>INDUCTION</scope>
</reference>
<reference key="7">
    <citation type="journal article" date="2012" name="Proc. Natl. Acad. Sci. U.S.A.">
        <title>N-terminal acetylome analyses and functional insights of the N-terminal acetyltransferase NatB.</title>
        <authorList>
            <person name="Van Damme P."/>
            <person name="Lasa M."/>
            <person name="Polevoda B."/>
            <person name="Gazquez C."/>
            <person name="Elosegui-Artola A."/>
            <person name="Kim D.S."/>
            <person name="De Juan-Pardo E."/>
            <person name="Demeyer K."/>
            <person name="Hole K."/>
            <person name="Larrea E."/>
            <person name="Timmerman E."/>
            <person name="Prieto J."/>
            <person name="Arnesen T."/>
            <person name="Sherman F."/>
            <person name="Gevaert K."/>
            <person name="Aldabe R."/>
        </authorList>
    </citation>
    <scope>IDENTIFICATION BY MASS SPECTROMETRY [LARGE SCALE ANALYSIS]</scope>
</reference>
<accession>P50088</accession>
<accession>D6VV16</accession>
<feature type="chain" id="PRO_0000202853" description="Stationary phase gene 1 protein">
    <location>
        <begin position="1"/>
        <end position="95"/>
    </location>
</feature>
<feature type="transmembrane region" description="Helical" evidence="1">
    <location>
        <begin position="20"/>
        <end position="38"/>
    </location>
</feature>